<sequence length="426" mass="46352">MKMPLTWYSWFLLSAWILNTGAEISITPEPAQPAEGDNVTLVVHGLSGELLAYNWYAGPTLSLTFLVASYIVSTGDETPGPAHTGREAVRPDGSLDIHGALPGHTGTYILQTLNRQFQTEVGYGHMQVYEILAPPTVMANDTALVERRDTLRLVCSSPSPAEVRWFFNGDALPVAVRLGMSPDGRMLTRHGVRREEAGAYQCEVWNPVSVSRSEPLNLTVYFGPERVAILQDSTTRTGCTIKVDFNMSLTLWCVARSCPEPEYVWAFNGKALKNGQDHLNISSMTAAHEGTYTCIAKNSKTLLSGSASVVVKLSAAAVAMMIVPVPTKPTEGQDVTLTVQGYPKDLLVYAWYRGPASEPNRLLSQLPSGNWIAGPAHTGREVGFANCSLLVQKLNLTDAGRYTLKTVTLQGKTDTLEVELQVAPLE</sequence>
<dbReference type="EMBL" id="AC149085">
    <property type="status" value="NOT_ANNOTATED_CDS"/>
    <property type="molecule type" value="Genomic_DNA"/>
</dbReference>
<dbReference type="EMBL" id="BC141087">
    <property type="protein sequence ID" value="AAI41088.1"/>
    <property type="molecule type" value="mRNA"/>
</dbReference>
<dbReference type="CCDS" id="CCDS39805.1"/>
<dbReference type="RefSeq" id="NP_001028591.2">
    <property type="nucleotide sequence ID" value="NM_001033419.2"/>
</dbReference>
<dbReference type="RefSeq" id="XP_006540172.1">
    <property type="nucleotide sequence ID" value="XM_006540109.2"/>
</dbReference>
<dbReference type="RefSeq" id="XP_006540173.1">
    <property type="nucleotide sequence ID" value="XM_006540110.2"/>
</dbReference>
<dbReference type="RefSeq" id="XP_011248907.1">
    <property type="nucleotide sequence ID" value="XM_011250605.2"/>
</dbReference>
<dbReference type="FunCoup" id="E9QA28">
    <property type="interactions" value="4"/>
</dbReference>
<dbReference type="STRING" id="10090.ENSMUSP00000014830"/>
<dbReference type="GlyCosmos" id="E9QA28">
    <property type="glycosylation" value="2 sites, No reported glycans"/>
</dbReference>
<dbReference type="GlyGen" id="E9QA28">
    <property type="glycosylation" value="5 sites, 3 N-linked glycans (3 sites)"/>
</dbReference>
<dbReference type="iPTMnet" id="E9QA28"/>
<dbReference type="PhosphoSitePlus" id="E9QA28"/>
<dbReference type="PaxDb" id="10090-ENSMUSP00000014830"/>
<dbReference type="Antibodypedia" id="31203">
    <property type="antibodies" value="125 antibodies from 25 providers"/>
</dbReference>
<dbReference type="Ensembl" id="ENSMUST00000014830.8">
    <property type="protein sequence ID" value="ENSMUSP00000014830.8"/>
    <property type="gene ID" value="ENSMUSG00000014686.9"/>
</dbReference>
<dbReference type="GeneID" id="330483"/>
<dbReference type="KEGG" id="mmu:330483"/>
<dbReference type="UCSC" id="uc009fnm.1">
    <property type="organism name" value="mouse"/>
</dbReference>
<dbReference type="AGR" id="MGI:2685615"/>
<dbReference type="CTD" id="388551"/>
<dbReference type="MGI" id="MGI:2685615">
    <property type="gene designation" value="Ceacam16"/>
</dbReference>
<dbReference type="VEuPathDB" id="HostDB:ENSMUSG00000014686"/>
<dbReference type="eggNOG" id="ENOG502S42Z">
    <property type="taxonomic scope" value="Eukaryota"/>
</dbReference>
<dbReference type="GeneTree" id="ENSGT01100000263479"/>
<dbReference type="HOGENOM" id="CLU_024555_2_0_1"/>
<dbReference type="InParanoid" id="E9QA28"/>
<dbReference type="OMA" id="WCVARSC"/>
<dbReference type="OrthoDB" id="6353782at2759"/>
<dbReference type="PhylomeDB" id="E9QA28"/>
<dbReference type="TreeFam" id="TF336859"/>
<dbReference type="BioGRID-ORCS" id="330483">
    <property type="hits" value="0 hits in 76 CRISPR screens"/>
</dbReference>
<dbReference type="ChiTaRS" id="Ceacam16">
    <property type="organism name" value="mouse"/>
</dbReference>
<dbReference type="PRO" id="PR:E9QA28"/>
<dbReference type="Proteomes" id="UP000000589">
    <property type="component" value="Chromosome 7"/>
</dbReference>
<dbReference type="RNAct" id="E9QA28">
    <property type="molecule type" value="protein"/>
</dbReference>
<dbReference type="Bgee" id="ENSMUSG00000014686">
    <property type="expression patterns" value="Expressed in internal ear and 24 other cell types or tissues"/>
</dbReference>
<dbReference type="ExpressionAtlas" id="E9QA28">
    <property type="expression patterns" value="baseline and differential"/>
</dbReference>
<dbReference type="GO" id="GO:0005615">
    <property type="term" value="C:extracellular space"/>
    <property type="evidence" value="ECO:0000250"/>
    <property type="project" value="UniProtKB"/>
</dbReference>
<dbReference type="GO" id="GO:0032426">
    <property type="term" value="C:stereocilium tip"/>
    <property type="evidence" value="ECO:0000314"/>
    <property type="project" value="MGI"/>
</dbReference>
<dbReference type="GO" id="GO:0042802">
    <property type="term" value="F:identical protein binding"/>
    <property type="evidence" value="ECO:0000250"/>
    <property type="project" value="UniProtKB"/>
</dbReference>
<dbReference type="GO" id="GO:0007605">
    <property type="term" value="P:sensory perception of sound"/>
    <property type="evidence" value="ECO:0000315"/>
    <property type="project" value="UniProtKB"/>
</dbReference>
<dbReference type="CDD" id="cd05740">
    <property type="entry name" value="IgI_hCEACAM_2_4_6_like"/>
    <property type="match status" value="1"/>
</dbReference>
<dbReference type="CDD" id="cd05774">
    <property type="entry name" value="IgV_CEACAM_D1"/>
    <property type="match status" value="2"/>
</dbReference>
<dbReference type="FunFam" id="2.60.40.10:FF:000947">
    <property type="entry name" value="Carcinoembryonic antigen related cell adhesion molecule 16"/>
    <property type="match status" value="1"/>
</dbReference>
<dbReference type="FunFam" id="2.60.40.10:FF:001283">
    <property type="entry name" value="Carcinoembryonic antigen related cell adhesion molecule 16"/>
    <property type="match status" value="1"/>
</dbReference>
<dbReference type="FunFam" id="2.60.40.10:FF:000244">
    <property type="entry name" value="carcinoembryonic antigen-related cell adhesion molecule 16"/>
    <property type="match status" value="1"/>
</dbReference>
<dbReference type="FunFam" id="2.60.40.10:FF:001282">
    <property type="entry name" value="carcinoembryonic antigen-related cell adhesion molecule 16"/>
    <property type="match status" value="1"/>
</dbReference>
<dbReference type="Gene3D" id="2.60.40.10">
    <property type="entry name" value="Immunoglobulins"/>
    <property type="match status" value="4"/>
</dbReference>
<dbReference type="InterPro" id="IPR050831">
    <property type="entry name" value="CEA_cell_adhesion"/>
</dbReference>
<dbReference type="InterPro" id="IPR007110">
    <property type="entry name" value="Ig-like_dom"/>
</dbReference>
<dbReference type="InterPro" id="IPR036179">
    <property type="entry name" value="Ig-like_dom_sf"/>
</dbReference>
<dbReference type="InterPro" id="IPR013783">
    <property type="entry name" value="Ig-like_fold"/>
</dbReference>
<dbReference type="InterPro" id="IPR003599">
    <property type="entry name" value="Ig_sub"/>
</dbReference>
<dbReference type="InterPro" id="IPR003598">
    <property type="entry name" value="Ig_sub2"/>
</dbReference>
<dbReference type="InterPro" id="IPR013106">
    <property type="entry name" value="Ig_V-set"/>
</dbReference>
<dbReference type="PANTHER" id="PTHR44427:SF1">
    <property type="entry name" value="CARCINOEMBRYONIC ANTIGEN-RELATED CELL ADHESION MOLECULE 1"/>
    <property type="match status" value="1"/>
</dbReference>
<dbReference type="PANTHER" id="PTHR44427">
    <property type="entry name" value="CARCINOEMBRYONIC ANTIGEN-RELATED CELL ADHESION MOLECULE 19"/>
    <property type="match status" value="1"/>
</dbReference>
<dbReference type="Pfam" id="PF13927">
    <property type="entry name" value="Ig_3"/>
    <property type="match status" value="2"/>
</dbReference>
<dbReference type="Pfam" id="PF07686">
    <property type="entry name" value="V-set"/>
    <property type="match status" value="1"/>
</dbReference>
<dbReference type="SMART" id="SM00409">
    <property type="entry name" value="IG"/>
    <property type="match status" value="4"/>
</dbReference>
<dbReference type="SMART" id="SM00408">
    <property type="entry name" value="IGc2"/>
    <property type="match status" value="2"/>
</dbReference>
<dbReference type="SUPFAM" id="SSF48726">
    <property type="entry name" value="Immunoglobulin"/>
    <property type="match status" value="4"/>
</dbReference>
<dbReference type="PROSITE" id="PS50835">
    <property type="entry name" value="IG_LIKE"/>
    <property type="match status" value="2"/>
</dbReference>
<accession>E9QA28</accession>
<accession>B2RUD6</accession>
<gene>
    <name evidence="8" type="primary">Ceacam16</name>
</gene>
<reference key="1">
    <citation type="journal article" date="2009" name="PLoS Biol.">
        <title>Lineage-specific biology revealed by a finished genome assembly of the mouse.</title>
        <authorList>
            <person name="Church D.M."/>
            <person name="Goodstadt L."/>
            <person name="Hillier L.W."/>
            <person name="Zody M.C."/>
            <person name="Goldstein S."/>
            <person name="She X."/>
            <person name="Bult C.J."/>
            <person name="Agarwala R."/>
            <person name="Cherry J.L."/>
            <person name="DiCuccio M."/>
            <person name="Hlavina W."/>
            <person name="Kapustin Y."/>
            <person name="Meric P."/>
            <person name="Maglott D."/>
            <person name="Birtle Z."/>
            <person name="Marques A.C."/>
            <person name="Graves T."/>
            <person name="Zhou S."/>
            <person name="Teague B."/>
            <person name="Potamousis K."/>
            <person name="Churas C."/>
            <person name="Place M."/>
            <person name="Herschleb J."/>
            <person name="Runnheim R."/>
            <person name="Forrest D."/>
            <person name="Amos-Landgraf J."/>
            <person name="Schwartz D.C."/>
            <person name="Cheng Z."/>
            <person name="Lindblad-Toh K."/>
            <person name="Eichler E.E."/>
            <person name="Ponting C.P."/>
        </authorList>
    </citation>
    <scope>NUCLEOTIDE SEQUENCE [LARGE SCALE GENOMIC DNA]</scope>
    <source>
        <strain>C57BL/6J</strain>
    </source>
</reference>
<reference key="2">
    <citation type="journal article" date="2004" name="Genome Res.">
        <title>The status, quality, and expansion of the NIH full-length cDNA project: the Mammalian Gene Collection (MGC).</title>
        <authorList>
            <consortium name="The MGC Project Team"/>
        </authorList>
    </citation>
    <scope>NUCLEOTIDE SEQUENCE [LARGE SCALE MRNA]</scope>
    <source>
        <tissue>Brain</tissue>
    </source>
</reference>
<reference key="3">
    <citation type="journal article" date="2011" name="Proc. Natl. Acad. Sci. U.S.A.">
        <title>Carcinoembryonic antigen-related cell adhesion molecule 16 interacts with alpha-tectorin and is mutated in autosomal dominant hearing loss (DFNA4).</title>
        <authorList>
            <person name="Zheng J."/>
            <person name="Miller K.K."/>
            <person name="Yang T."/>
            <person name="Hildebrand M.S."/>
            <person name="Shearer A.E."/>
            <person name="DeLuca A.P."/>
            <person name="Scheetz T.E."/>
            <person name="Drummond J."/>
            <person name="Scherer S.E."/>
            <person name="Legan P.K."/>
            <person name="Goodyear R.J."/>
            <person name="Richardson G.P."/>
            <person name="Cheatham M.A."/>
            <person name="Smith R.J."/>
            <person name="Dallos P."/>
        </authorList>
    </citation>
    <scope>DEVELOPMENTAL STAGE</scope>
    <scope>TISSUE SPECIFICITY</scope>
    <scope>MUTAGENESIS OF THR-142</scope>
    <scope>SUBCELLULAR LOCATION</scope>
</reference>
<reference key="4">
    <citation type="journal article" date="2014" name="J. Neurosci.">
        <title>Loss of the tectorial membrane protein CEACAM16 enhances spontaneous, stimulus-frequency, and transiently evoked otoacoustic emissions.</title>
        <authorList>
            <person name="Cheatham M.A."/>
            <person name="Goodyear R.J."/>
            <person name="Homma K."/>
            <person name="Legan P.K."/>
            <person name="Korchagina J."/>
            <person name="Naskar S."/>
            <person name="Siegel J.H."/>
            <person name="Dallos P."/>
            <person name="Zheng J."/>
            <person name="Richardson G.P."/>
        </authorList>
    </citation>
    <scope>FUNCTION</scope>
    <scope>DISRUPTION PHENOTYPE</scope>
    <scope>INTERACTION WITH TECTA AND TECTB</scope>
</reference>
<protein>
    <recommendedName>
        <fullName evidence="7">Cell adhesion molecule CEACAM16</fullName>
    </recommendedName>
    <alternativeName>
        <fullName>Carcinoembryonic antigen-related cell adhesion molecule 16</fullName>
        <shortName evidence="8">CEA cell adhesion molecule 16</shortName>
    </alternativeName>
</protein>
<organism>
    <name type="scientific">Mus musculus</name>
    <name type="common">Mouse</name>
    <dbReference type="NCBI Taxonomy" id="10090"/>
    <lineage>
        <taxon>Eukaryota</taxon>
        <taxon>Metazoa</taxon>
        <taxon>Chordata</taxon>
        <taxon>Craniata</taxon>
        <taxon>Vertebrata</taxon>
        <taxon>Euteleostomi</taxon>
        <taxon>Mammalia</taxon>
        <taxon>Eutheria</taxon>
        <taxon>Euarchontoglires</taxon>
        <taxon>Glires</taxon>
        <taxon>Rodentia</taxon>
        <taxon>Myomorpha</taxon>
        <taxon>Muroidea</taxon>
        <taxon>Muridae</taxon>
        <taxon>Murinae</taxon>
        <taxon>Mus</taxon>
        <taxon>Mus</taxon>
    </lineage>
</organism>
<name>CEA16_MOUSE</name>
<feature type="signal peptide" evidence="2">
    <location>
        <begin position="1"/>
        <end position="22"/>
    </location>
</feature>
<feature type="chain" id="PRO_0000417874" description="Cell adhesion molecule CEACAM16">
    <location>
        <begin position="23"/>
        <end position="426"/>
    </location>
</feature>
<feature type="domain" description="Ig-like C2-type 1">
    <location>
        <begin position="134"/>
        <end position="219"/>
    </location>
</feature>
<feature type="domain" description="Ig-like C2-type 2">
    <location>
        <begin position="224"/>
        <end position="310"/>
    </location>
</feature>
<feature type="region of interest" description="Disordered" evidence="4">
    <location>
        <begin position="77"/>
        <end position="96"/>
    </location>
</feature>
<feature type="compositionally biased region" description="Basic and acidic residues" evidence="4">
    <location>
        <begin position="84"/>
        <end position="95"/>
    </location>
</feature>
<feature type="glycosylation site" description="N-linked (GlcNAc...) asparagine" evidence="2">
    <location>
        <position position="38"/>
    </location>
</feature>
<feature type="glycosylation site" description="N-linked (GlcNAc...) asparagine" evidence="2">
    <location>
        <position position="217"/>
    </location>
</feature>
<feature type="disulfide bond" evidence="3">
    <location>
        <begin position="155"/>
        <end position="202"/>
    </location>
</feature>
<feature type="disulfide bond" evidence="3">
    <location>
        <begin position="253"/>
        <end position="294"/>
    </location>
</feature>
<feature type="mutagenesis site" description="Does not affect the interaction with TECTA nor subcellular localization." evidence="5">
    <original>T</original>
    <variation>P</variation>
    <location>
        <position position="142"/>
    </location>
</feature>
<feature type="sequence conflict" description="In Ref. 2; AAI41088." evidence="7" ref="2">
    <original>A</original>
    <variation>T</variation>
    <location>
        <position position="133"/>
    </location>
</feature>
<feature type="sequence conflict" description="In Ref. 2; AAI41088." evidence="7" ref="2">
    <original>M</original>
    <variation>T</variation>
    <location>
        <position position="247"/>
    </location>
</feature>
<proteinExistence type="evidence at protein level"/>
<keyword id="KW-1015">Disulfide bond</keyword>
<keyword id="KW-0325">Glycoprotein</keyword>
<keyword id="KW-0393">Immunoglobulin domain</keyword>
<keyword id="KW-1185">Reference proteome</keyword>
<keyword id="KW-0677">Repeat</keyword>
<keyword id="KW-0964">Secreted</keyword>
<keyword id="KW-0732">Signal</keyword>
<evidence type="ECO:0000250" key="1">
    <source>
        <dbReference type="UniProtKB" id="Q2WEN9"/>
    </source>
</evidence>
<evidence type="ECO:0000255" key="2"/>
<evidence type="ECO:0000255" key="3">
    <source>
        <dbReference type="PROSITE-ProRule" id="PRU00114"/>
    </source>
</evidence>
<evidence type="ECO:0000256" key="4">
    <source>
        <dbReference type="SAM" id="MobiDB-lite"/>
    </source>
</evidence>
<evidence type="ECO:0000269" key="5">
    <source>
    </source>
</evidence>
<evidence type="ECO:0000269" key="6">
    <source>
    </source>
</evidence>
<evidence type="ECO:0000305" key="7"/>
<evidence type="ECO:0000312" key="8">
    <source>
        <dbReference type="MGI" id="MGI:2685615"/>
    </source>
</evidence>
<comment type="function">
    <text evidence="6">Required for proper hearing, plays a role in maintaining the integrity of the tectorial membrane.</text>
</comment>
<comment type="subunit">
    <text evidence="1 6">Homooligomer; can for homodimers and homotetramers (By similarity). Interacts with TECTA and TECTB (PubMed:25080593).</text>
</comment>
<comment type="subcellular location">
    <subcellularLocation>
        <location evidence="5">Secreted</location>
    </subcellularLocation>
    <text evidence="5">Localizes at the tip of cochlear outer hair cells and to the tectorial membrane.</text>
</comment>
<comment type="tissue specificity">
    <text evidence="5">Expressed in cochlear outer hair cells (OHC).</text>
</comment>
<comment type="developmental stage">
    <text evidence="5">Abundantly expressed in cochleae from embryonic day 17 to postnatal day 42.</text>
</comment>
<comment type="disruption phenotype">
    <text evidence="6">Mutant mice show loss of striated-sheet matrix and Hensen's stripe, a prominent feature in the basal two-thirds of the tectorial membrane. They have enhanced spontaneous, stimulus-frequency, and transiently evoked otoacoustic emissions.</text>
</comment>
<comment type="similarity">
    <text evidence="7">Belongs to the immunoglobulin superfamily. CEA family.</text>
</comment>